<proteinExistence type="inferred from homology"/>
<comment type="cofactor">
    <cofactor evidence="1">
        <name>[4Fe-4S] cluster</name>
        <dbReference type="ChEBI" id="CHEBI:49883"/>
    </cofactor>
    <text evidence="1">Binds 1 [4Fe-4S] cluster. The cluster is coordinated with 3 cysteines and an exchangeable S-adenosyl-L-methionine.</text>
</comment>
<comment type="similarity">
    <text evidence="1">Belongs to the UPF0313 family.</text>
</comment>
<organism>
    <name type="scientific">Thermotoga sp. (strain RQ2)</name>
    <dbReference type="NCBI Taxonomy" id="126740"/>
    <lineage>
        <taxon>Bacteria</taxon>
        <taxon>Thermotogati</taxon>
        <taxon>Thermotogota</taxon>
        <taxon>Thermotogae</taxon>
        <taxon>Thermotogales</taxon>
        <taxon>Thermotogaceae</taxon>
        <taxon>Thermotoga</taxon>
    </lineage>
</organism>
<feature type="chain" id="PRO_1000139930" description="UPF0313 protein TRQ2_0596">
    <location>
        <begin position="1"/>
        <end position="567"/>
    </location>
</feature>
<feature type="domain" description="Radical SAM core" evidence="2">
    <location>
        <begin position="288"/>
        <end position="560"/>
    </location>
</feature>
<feature type="binding site" evidence="1">
    <location>
        <position position="303"/>
    </location>
    <ligand>
        <name>[4Fe-4S] cluster</name>
        <dbReference type="ChEBI" id="CHEBI:49883"/>
        <note>4Fe-4S-S-AdoMet</note>
    </ligand>
</feature>
<feature type="binding site" evidence="1">
    <location>
        <position position="307"/>
    </location>
    <ligand>
        <name>[4Fe-4S] cluster</name>
        <dbReference type="ChEBI" id="CHEBI:49883"/>
        <note>4Fe-4S-S-AdoMet</note>
    </ligand>
</feature>
<feature type="binding site" evidence="1">
    <location>
        <position position="310"/>
    </location>
    <ligand>
        <name>[4Fe-4S] cluster</name>
        <dbReference type="ChEBI" id="CHEBI:49883"/>
        <note>4Fe-4S-S-AdoMet</note>
    </ligand>
</feature>
<name>Y596_THESQ</name>
<keyword id="KW-0004">4Fe-4S</keyword>
<keyword id="KW-0408">Iron</keyword>
<keyword id="KW-0411">Iron-sulfur</keyword>
<keyword id="KW-0479">Metal-binding</keyword>
<keyword id="KW-0949">S-adenosyl-L-methionine</keyword>
<protein>
    <recommendedName>
        <fullName evidence="1">UPF0313 protein TRQ2_0596</fullName>
    </recommendedName>
</protein>
<sequence length="567" mass="64950">MFLPTTREEMKKLGWRELDVILVTGDAYVDHPSFGVALIGHYLVSHGFKVGIIAQPDWRTEKDITRLGRPRLFFGVTAGNVDSMVANYTASKKKRKTDDYTPGGSGGKRPDRATIVYTNLIKRFFPEVPVVLGGLEASLRRFAHYDWWSEKVRKSILIDSKVDLLVYGMGEKAVLEIAQILSRTGDIEKCKSVRGVVWWSSQKPEGGIELPSYDEISENPEKYAEALKLQTWYTDPYKNILIYQKQDTRYVVQNPPQLPLSQEELDRLYLLPFEREVHPFYAKMGRVKAIETVKFSITAVRGCFGSCSFCALTQHQTTHVSYRSKDSILEEVRILTKKKDFKGTITDVGGPTANLYGSSCSIRETKGQCQKFCLYPSVCKIVRPNHDEFISLLESIRKIPGVRNVFVSSGIRHDFVLAEKDPDVFIRELVKYTPGQLKLAPEHAHPKVLSLMRKPPVELFLEFKRRFETLAKKIGKRKYVIGYFIVGHPGEGWRENNYLRDFILKHLGYFPQQIQIFTPTPGTVSTAMYYSGLDPFTGEKVHVERSLKVRNKMKENVLFKKKGREKR</sequence>
<accession>B1L9F1</accession>
<reference key="1">
    <citation type="journal article" date="2011" name="J. Bacteriol.">
        <title>Genome sequence of Thermotoga sp. strain RQ2, a hyperthermophilic bacterium isolated from a geothermally heated region of the seafloor near Ribeira Quente, the Azores.</title>
        <authorList>
            <person name="Swithers K.S."/>
            <person name="DiPippo J.L."/>
            <person name="Bruce D.C."/>
            <person name="Detter C."/>
            <person name="Tapia R."/>
            <person name="Han S."/>
            <person name="Saunders E."/>
            <person name="Goodwin L.A."/>
            <person name="Han J."/>
            <person name="Woyke T."/>
            <person name="Pitluck S."/>
            <person name="Pennacchio L."/>
            <person name="Nolan M."/>
            <person name="Mikhailova N."/>
            <person name="Lykidis A."/>
            <person name="Land M.L."/>
            <person name="Brettin T."/>
            <person name="Stetter K.O."/>
            <person name="Nelson K.E."/>
            <person name="Gogarten J.P."/>
            <person name="Noll K.M."/>
        </authorList>
    </citation>
    <scope>NUCLEOTIDE SEQUENCE [LARGE SCALE GENOMIC DNA]</scope>
    <source>
        <strain>RQ2</strain>
    </source>
</reference>
<gene>
    <name type="ordered locus">TRQ2_0596</name>
</gene>
<dbReference type="EMBL" id="CP000969">
    <property type="protein sequence ID" value="ACB08949.1"/>
    <property type="molecule type" value="Genomic_DNA"/>
</dbReference>
<dbReference type="RefSeq" id="WP_011943201.1">
    <property type="nucleotide sequence ID" value="NC_010483.1"/>
</dbReference>
<dbReference type="KEGG" id="trq:TRQ2_0596"/>
<dbReference type="HOGENOM" id="CLU_018288_2_0_0"/>
<dbReference type="Proteomes" id="UP000001687">
    <property type="component" value="Chromosome"/>
</dbReference>
<dbReference type="GO" id="GO:0051539">
    <property type="term" value="F:4 iron, 4 sulfur cluster binding"/>
    <property type="evidence" value="ECO:0007669"/>
    <property type="project" value="UniProtKB-KW"/>
</dbReference>
<dbReference type="GO" id="GO:0003824">
    <property type="term" value="F:catalytic activity"/>
    <property type="evidence" value="ECO:0007669"/>
    <property type="project" value="InterPro"/>
</dbReference>
<dbReference type="GO" id="GO:0005506">
    <property type="term" value="F:iron ion binding"/>
    <property type="evidence" value="ECO:0007669"/>
    <property type="project" value="UniProtKB-UniRule"/>
</dbReference>
<dbReference type="Gene3D" id="3.80.30.20">
    <property type="entry name" value="tm_1862 like domain"/>
    <property type="match status" value="1"/>
</dbReference>
<dbReference type="HAMAP" id="MF_01251">
    <property type="entry name" value="UPF0313"/>
    <property type="match status" value="1"/>
</dbReference>
<dbReference type="InterPro" id="IPR006638">
    <property type="entry name" value="Elp3/MiaA/NifB-like_rSAM"/>
</dbReference>
<dbReference type="InterPro" id="IPR007197">
    <property type="entry name" value="rSAM"/>
</dbReference>
<dbReference type="InterPro" id="IPR023404">
    <property type="entry name" value="rSAM_horseshoe"/>
</dbReference>
<dbReference type="InterPro" id="IPR022946">
    <property type="entry name" value="UPF0313"/>
</dbReference>
<dbReference type="InterPro" id="IPR024560">
    <property type="entry name" value="UPF0313_C"/>
</dbReference>
<dbReference type="InterPro" id="IPR013704">
    <property type="entry name" value="UPF0313_N"/>
</dbReference>
<dbReference type="NCBIfam" id="TIGR03904">
    <property type="entry name" value="SAM_YgiQ"/>
    <property type="match status" value="1"/>
</dbReference>
<dbReference type="PANTHER" id="PTHR32331">
    <property type="entry name" value="UPF0313 PROTEIN YGIQ"/>
    <property type="match status" value="1"/>
</dbReference>
<dbReference type="PANTHER" id="PTHR32331:SF0">
    <property type="entry name" value="UPF0313 PROTEIN YGIQ"/>
    <property type="match status" value="1"/>
</dbReference>
<dbReference type="Pfam" id="PF11842">
    <property type="entry name" value="DUF3362"/>
    <property type="match status" value="1"/>
</dbReference>
<dbReference type="Pfam" id="PF04055">
    <property type="entry name" value="Radical_SAM"/>
    <property type="match status" value="1"/>
</dbReference>
<dbReference type="Pfam" id="PF08497">
    <property type="entry name" value="Radical_SAM_N"/>
    <property type="match status" value="1"/>
</dbReference>
<dbReference type="SFLD" id="SFLDG01082">
    <property type="entry name" value="B12-binding_domain_containing"/>
    <property type="match status" value="1"/>
</dbReference>
<dbReference type="SFLD" id="SFLDS00029">
    <property type="entry name" value="Radical_SAM"/>
    <property type="match status" value="1"/>
</dbReference>
<dbReference type="SFLD" id="SFLDG01069">
    <property type="entry name" value="UPF0313"/>
    <property type="match status" value="1"/>
</dbReference>
<dbReference type="SMART" id="SM00729">
    <property type="entry name" value="Elp3"/>
    <property type="match status" value="1"/>
</dbReference>
<dbReference type="SUPFAM" id="SSF102114">
    <property type="entry name" value="Radical SAM enzymes"/>
    <property type="match status" value="1"/>
</dbReference>
<dbReference type="PROSITE" id="PS51918">
    <property type="entry name" value="RADICAL_SAM"/>
    <property type="match status" value="1"/>
</dbReference>
<evidence type="ECO:0000255" key="1">
    <source>
        <dbReference type="HAMAP-Rule" id="MF_01251"/>
    </source>
</evidence>
<evidence type="ECO:0000255" key="2">
    <source>
        <dbReference type="PROSITE-ProRule" id="PRU01266"/>
    </source>
</evidence>